<name>GLYA_BACCN</name>
<evidence type="ECO:0000255" key="1">
    <source>
        <dbReference type="HAMAP-Rule" id="MF_00051"/>
    </source>
</evidence>
<organism>
    <name type="scientific">Bacillus cytotoxicus (strain DSM 22905 / CIP 110041 / 391-98 / NVH 391-98)</name>
    <dbReference type="NCBI Taxonomy" id="315749"/>
    <lineage>
        <taxon>Bacteria</taxon>
        <taxon>Bacillati</taxon>
        <taxon>Bacillota</taxon>
        <taxon>Bacilli</taxon>
        <taxon>Bacillales</taxon>
        <taxon>Bacillaceae</taxon>
        <taxon>Bacillus</taxon>
        <taxon>Bacillus cereus group</taxon>
    </lineage>
</organism>
<accession>A7GV66</accession>
<protein>
    <recommendedName>
        <fullName evidence="1">Serine hydroxymethyltransferase</fullName>
        <shortName evidence="1">SHMT</shortName>
        <shortName evidence="1">Serine methylase</shortName>
        <ecNumber evidence="1">2.1.2.1</ecNumber>
    </recommendedName>
</protein>
<sequence>MDHLKRQDEKVFAAIEAELGRQRSKIELIASENFVSEAVMEAQGSVLTNKYAEGYPGKRYYGGCEHVDVVEDIARDRVKEIFGAEHVNVQPHSGAQANMAVYFTILEHGDTVLGMNLSHGGHLTHGSPVNFSGVQYNFVEYGVDAETHRINYDDVLAKAKEHKPKLIVAGASAYPRVIDFKRFREIADEVGAYLMVDMAHIAGLVAAGLHPNPVPHAHFVTTTTHKTLRGPRGGMILCEEKFAKQIDKSIFPGIQGGPLMHVIAAKAVAFGEALQDDFKTYAQNIIHNAQRLAEGLQKEGLTLVSGGTDNHLILIDVRNLNITGKVAEHVLDEVGITVNKNTIPFETASPFVTSGVRIGTAAVTSRGFGLEEMDEIASIIAHTLKNHEDETALEEARKRVAVLTSKFPMYTDL</sequence>
<comment type="function">
    <text evidence="1">Catalyzes the reversible interconversion of serine and glycine with tetrahydrofolate (THF) serving as the one-carbon carrier. This reaction serves as the major source of one-carbon groups required for the biosynthesis of purines, thymidylate, methionine, and other important biomolecules. Also exhibits THF-independent aldolase activity toward beta-hydroxyamino acids, producing glycine and aldehydes, via a retro-aldol mechanism.</text>
</comment>
<comment type="catalytic activity">
    <reaction evidence="1">
        <text>(6R)-5,10-methylene-5,6,7,8-tetrahydrofolate + glycine + H2O = (6S)-5,6,7,8-tetrahydrofolate + L-serine</text>
        <dbReference type="Rhea" id="RHEA:15481"/>
        <dbReference type="ChEBI" id="CHEBI:15377"/>
        <dbReference type="ChEBI" id="CHEBI:15636"/>
        <dbReference type="ChEBI" id="CHEBI:33384"/>
        <dbReference type="ChEBI" id="CHEBI:57305"/>
        <dbReference type="ChEBI" id="CHEBI:57453"/>
        <dbReference type="EC" id="2.1.2.1"/>
    </reaction>
</comment>
<comment type="cofactor">
    <cofactor evidence="1">
        <name>pyridoxal 5'-phosphate</name>
        <dbReference type="ChEBI" id="CHEBI:597326"/>
    </cofactor>
</comment>
<comment type="pathway">
    <text evidence="1">One-carbon metabolism; tetrahydrofolate interconversion.</text>
</comment>
<comment type="pathway">
    <text evidence="1">Amino-acid biosynthesis; glycine biosynthesis; glycine from L-serine: step 1/1.</text>
</comment>
<comment type="subunit">
    <text evidence="1">Homodimer.</text>
</comment>
<comment type="subcellular location">
    <subcellularLocation>
        <location evidence="1">Cytoplasm</location>
    </subcellularLocation>
</comment>
<comment type="similarity">
    <text evidence="1">Belongs to the SHMT family.</text>
</comment>
<dbReference type="EC" id="2.1.2.1" evidence="1"/>
<dbReference type="EMBL" id="CP000764">
    <property type="protein sequence ID" value="ABS24024.1"/>
    <property type="molecule type" value="Genomic_DNA"/>
</dbReference>
<dbReference type="RefSeq" id="WP_012096282.1">
    <property type="nucleotide sequence ID" value="NC_009674.1"/>
</dbReference>
<dbReference type="SMR" id="A7GV66"/>
<dbReference type="STRING" id="315749.Bcer98_3835"/>
<dbReference type="GeneID" id="33899076"/>
<dbReference type="KEGG" id="bcy:Bcer98_3835"/>
<dbReference type="eggNOG" id="COG0112">
    <property type="taxonomic scope" value="Bacteria"/>
</dbReference>
<dbReference type="HOGENOM" id="CLU_022477_2_1_9"/>
<dbReference type="OrthoDB" id="9803846at2"/>
<dbReference type="UniPathway" id="UPA00193"/>
<dbReference type="UniPathway" id="UPA00288">
    <property type="reaction ID" value="UER01023"/>
</dbReference>
<dbReference type="Proteomes" id="UP000002300">
    <property type="component" value="Chromosome"/>
</dbReference>
<dbReference type="GO" id="GO:0005829">
    <property type="term" value="C:cytosol"/>
    <property type="evidence" value="ECO:0007669"/>
    <property type="project" value="TreeGrafter"/>
</dbReference>
<dbReference type="GO" id="GO:0004372">
    <property type="term" value="F:glycine hydroxymethyltransferase activity"/>
    <property type="evidence" value="ECO:0007669"/>
    <property type="project" value="UniProtKB-UniRule"/>
</dbReference>
<dbReference type="GO" id="GO:0030170">
    <property type="term" value="F:pyridoxal phosphate binding"/>
    <property type="evidence" value="ECO:0007669"/>
    <property type="project" value="UniProtKB-UniRule"/>
</dbReference>
<dbReference type="GO" id="GO:0019264">
    <property type="term" value="P:glycine biosynthetic process from serine"/>
    <property type="evidence" value="ECO:0007669"/>
    <property type="project" value="UniProtKB-UniRule"/>
</dbReference>
<dbReference type="GO" id="GO:0035999">
    <property type="term" value="P:tetrahydrofolate interconversion"/>
    <property type="evidence" value="ECO:0007669"/>
    <property type="project" value="UniProtKB-UniRule"/>
</dbReference>
<dbReference type="CDD" id="cd00378">
    <property type="entry name" value="SHMT"/>
    <property type="match status" value="1"/>
</dbReference>
<dbReference type="FunFam" id="3.40.640.10:FF:000001">
    <property type="entry name" value="Serine hydroxymethyltransferase"/>
    <property type="match status" value="1"/>
</dbReference>
<dbReference type="FunFam" id="3.90.1150.10:FF:000003">
    <property type="entry name" value="Serine hydroxymethyltransferase"/>
    <property type="match status" value="1"/>
</dbReference>
<dbReference type="Gene3D" id="3.90.1150.10">
    <property type="entry name" value="Aspartate Aminotransferase, domain 1"/>
    <property type="match status" value="1"/>
</dbReference>
<dbReference type="Gene3D" id="3.40.640.10">
    <property type="entry name" value="Type I PLP-dependent aspartate aminotransferase-like (Major domain)"/>
    <property type="match status" value="1"/>
</dbReference>
<dbReference type="HAMAP" id="MF_00051">
    <property type="entry name" value="SHMT"/>
    <property type="match status" value="1"/>
</dbReference>
<dbReference type="InterPro" id="IPR015424">
    <property type="entry name" value="PyrdxlP-dep_Trfase"/>
</dbReference>
<dbReference type="InterPro" id="IPR015421">
    <property type="entry name" value="PyrdxlP-dep_Trfase_major"/>
</dbReference>
<dbReference type="InterPro" id="IPR015422">
    <property type="entry name" value="PyrdxlP-dep_Trfase_small"/>
</dbReference>
<dbReference type="InterPro" id="IPR001085">
    <property type="entry name" value="Ser_HO-MeTrfase"/>
</dbReference>
<dbReference type="InterPro" id="IPR049943">
    <property type="entry name" value="Ser_HO-MeTrfase-like"/>
</dbReference>
<dbReference type="InterPro" id="IPR019798">
    <property type="entry name" value="Ser_HO-MeTrfase_PLP_BS"/>
</dbReference>
<dbReference type="InterPro" id="IPR039429">
    <property type="entry name" value="SHMT-like_dom"/>
</dbReference>
<dbReference type="NCBIfam" id="NF000586">
    <property type="entry name" value="PRK00011.1"/>
    <property type="match status" value="1"/>
</dbReference>
<dbReference type="PANTHER" id="PTHR11680">
    <property type="entry name" value="SERINE HYDROXYMETHYLTRANSFERASE"/>
    <property type="match status" value="1"/>
</dbReference>
<dbReference type="PANTHER" id="PTHR11680:SF35">
    <property type="entry name" value="SERINE HYDROXYMETHYLTRANSFERASE 1"/>
    <property type="match status" value="1"/>
</dbReference>
<dbReference type="Pfam" id="PF00464">
    <property type="entry name" value="SHMT"/>
    <property type="match status" value="1"/>
</dbReference>
<dbReference type="PIRSF" id="PIRSF000412">
    <property type="entry name" value="SHMT"/>
    <property type="match status" value="1"/>
</dbReference>
<dbReference type="SUPFAM" id="SSF53383">
    <property type="entry name" value="PLP-dependent transferases"/>
    <property type="match status" value="1"/>
</dbReference>
<dbReference type="PROSITE" id="PS00096">
    <property type="entry name" value="SHMT"/>
    <property type="match status" value="1"/>
</dbReference>
<proteinExistence type="inferred from homology"/>
<gene>
    <name evidence="1" type="primary">glyA</name>
    <name type="ordered locus">Bcer98_3835</name>
</gene>
<keyword id="KW-0028">Amino-acid biosynthesis</keyword>
<keyword id="KW-0963">Cytoplasm</keyword>
<keyword id="KW-0554">One-carbon metabolism</keyword>
<keyword id="KW-0663">Pyridoxal phosphate</keyword>
<keyword id="KW-0808">Transferase</keyword>
<feature type="chain" id="PRO_1000074886" description="Serine hydroxymethyltransferase">
    <location>
        <begin position="1"/>
        <end position="413"/>
    </location>
</feature>
<feature type="binding site" evidence="1">
    <location>
        <position position="117"/>
    </location>
    <ligand>
        <name>(6S)-5,6,7,8-tetrahydrofolate</name>
        <dbReference type="ChEBI" id="CHEBI:57453"/>
    </ligand>
</feature>
<feature type="binding site" evidence="1">
    <location>
        <begin position="121"/>
        <end position="123"/>
    </location>
    <ligand>
        <name>(6S)-5,6,7,8-tetrahydrofolate</name>
        <dbReference type="ChEBI" id="CHEBI:57453"/>
    </ligand>
</feature>
<feature type="binding site" evidence="1">
    <location>
        <position position="239"/>
    </location>
    <ligand>
        <name>(6S)-5,6,7,8-tetrahydrofolate</name>
        <dbReference type="ChEBI" id="CHEBI:57453"/>
    </ligand>
</feature>
<feature type="binding site" evidence="1">
    <location>
        <begin position="349"/>
        <end position="351"/>
    </location>
    <ligand>
        <name>(6S)-5,6,7,8-tetrahydrofolate</name>
        <dbReference type="ChEBI" id="CHEBI:57453"/>
    </ligand>
</feature>
<feature type="site" description="Plays an important role in substrate specificity" evidence="1">
    <location>
        <position position="225"/>
    </location>
</feature>
<feature type="modified residue" description="N6-(pyridoxal phosphate)lysine" evidence="1">
    <location>
        <position position="226"/>
    </location>
</feature>
<reference key="1">
    <citation type="journal article" date="2008" name="Chem. Biol. Interact.">
        <title>Extending the Bacillus cereus group genomics to putative food-borne pathogens of different toxicity.</title>
        <authorList>
            <person name="Lapidus A."/>
            <person name="Goltsman E."/>
            <person name="Auger S."/>
            <person name="Galleron N."/>
            <person name="Segurens B."/>
            <person name="Dossat C."/>
            <person name="Land M.L."/>
            <person name="Broussolle V."/>
            <person name="Brillard J."/>
            <person name="Guinebretiere M.-H."/>
            <person name="Sanchis V."/>
            <person name="Nguen-the C."/>
            <person name="Lereclus D."/>
            <person name="Richardson P."/>
            <person name="Wincker P."/>
            <person name="Weissenbach J."/>
            <person name="Ehrlich S.D."/>
            <person name="Sorokin A."/>
        </authorList>
    </citation>
    <scope>NUCLEOTIDE SEQUENCE [LARGE SCALE GENOMIC DNA]</scope>
    <source>
        <strain>DSM 22905 / CIP 110041 / 391-98 / NVH 391-98</strain>
    </source>
</reference>